<evidence type="ECO:0000256" key="1">
    <source>
        <dbReference type="SAM" id="MobiDB-lite"/>
    </source>
</evidence>
<evidence type="ECO:0000269" key="2">
    <source>
    </source>
</evidence>
<evidence type="ECO:0000269" key="3">
    <source>
    </source>
</evidence>
<evidence type="ECO:0000269" key="4">
    <source>
    </source>
</evidence>
<evidence type="ECO:0000269" key="5">
    <source>
    </source>
</evidence>
<evidence type="ECO:0000269" key="6">
    <source>
    </source>
</evidence>
<evidence type="ECO:0000269" key="7">
    <source>
    </source>
</evidence>
<evidence type="ECO:0000269" key="8">
    <source>
    </source>
</evidence>
<evidence type="ECO:0000269" key="9">
    <source>
    </source>
</evidence>
<evidence type="ECO:0000269" key="10">
    <source>
    </source>
</evidence>
<evidence type="ECO:0000305" key="11"/>
<evidence type="ECO:0007744" key="12">
    <source>
    </source>
</evidence>
<proteinExistence type="evidence at protein level"/>
<feature type="chain" id="PRO_0000096382" description="Mediator of RNA polymerase II transcription subunit 3">
    <location>
        <begin position="1"/>
        <end position="397"/>
    </location>
</feature>
<feature type="region of interest" description="Disordered" evidence="1">
    <location>
        <begin position="147"/>
        <end position="227"/>
    </location>
</feature>
<feature type="region of interest" description="Disordered" evidence="1">
    <location>
        <begin position="288"/>
        <end position="327"/>
    </location>
</feature>
<feature type="region of interest" description="Disordered" evidence="1">
    <location>
        <begin position="346"/>
        <end position="370"/>
    </location>
</feature>
<feature type="compositionally biased region" description="Low complexity" evidence="1">
    <location>
        <begin position="147"/>
        <end position="165"/>
    </location>
</feature>
<feature type="compositionally biased region" description="Polar residues" evidence="1">
    <location>
        <begin position="166"/>
        <end position="178"/>
    </location>
</feature>
<feature type="compositionally biased region" description="Polar residues" evidence="1">
    <location>
        <begin position="189"/>
        <end position="202"/>
    </location>
</feature>
<feature type="compositionally biased region" description="Basic residues" evidence="1">
    <location>
        <begin position="211"/>
        <end position="223"/>
    </location>
</feature>
<feature type="compositionally biased region" description="Polar residues" evidence="1">
    <location>
        <begin position="290"/>
        <end position="303"/>
    </location>
</feature>
<feature type="compositionally biased region" description="Low complexity" evidence="1">
    <location>
        <begin position="309"/>
        <end position="322"/>
    </location>
</feature>
<feature type="modified residue" description="N-acetylmethionine" evidence="12">
    <location>
        <position position="1"/>
    </location>
</feature>
<feature type="sequence conflict" description="In Ref. 5; AAT92986." evidence="11" ref="5">
    <original>A</original>
    <variation>T</variation>
    <location>
        <position position="158"/>
    </location>
</feature>
<organism>
    <name type="scientific">Saccharomyces cerevisiae (strain ATCC 204508 / S288c)</name>
    <name type="common">Baker's yeast</name>
    <dbReference type="NCBI Taxonomy" id="559292"/>
    <lineage>
        <taxon>Eukaryota</taxon>
        <taxon>Fungi</taxon>
        <taxon>Dikarya</taxon>
        <taxon>Ascomycota</taxon>
        <taxon>Saccharomycotina</taxon>
        <taxon>Saccharomycetes</taxon>
        <taxon>Saccharomycetales</taxon>
        <taxon>Saccharomycetaceae</taxon>
        <taxon>Saccharomyces</taxon>
    </lineage>
</organism>
<protein>
    <recommendedName>
        <fullName>Mediator of RNA polymerase II transcription subunit 3</fullName>
    </recommendedName>
    <alternativeName>
        <fullName>Hyper-recombination suppressor protein 1</fullName>
    </alternativeName>
    <alternativeName>
        <fullName>Mediator complex subunit 3</fullName>
    </alternativeName>
    <alternativeName>
        <fullName>Poly-glutamine domain protein 1</fullName>
    </alternativeName>
</protein>
<comment type="function">
    <text evidence="2 5 6 7 10">Component of the Mediator complex, a coactivator involved in the regulated transcription of nearly all RNA polymerase II-dependent genes. Mediator functions as a bridge to convey information from gene-specific regulatory proteins to the basal RNA polymerase II transcription machinery. The Mediator complex, having a compact conformation in its free form, is recruited to promoters by direct interactions with regulatory proteins and serves for the assembly of a functional preinitiation complex with RNA polymerase II and the general transcription factors. The Mediator complex unfolds to an extended conformation and partially surrounds RNA polymerase II, specifically interacting with the unphosphorylated form of the C-terminal domain (CTD) of RNA polymerase II. The Mediator complex dissociates from the RNA polymerase II holoenzyme and stays at the promoter when transcriptional elongation begins. PGD1/MED3 is also involved in direct repeat recombination.</text>
</comment>
<comment type="subunit">
    <text evidence="2 9">Component of the Mediator complex, which is composed of at least 21 subunits that form three structurally distinct submodules. The Mediator head module contains MED6, MED8, MED11, SRB4/MED17, SRB5/MED18, ROX3/MED19, SRB2/MED20 and SRB6/MED22, the middle module contains MED1, MED4, NUT1/MED5, MED7, CSE2/MED9, NUT2/MED10, SRB7/MED21 and SOH1/MED31, and the tail module contains MED2, PGD1/MED3, RGR1/MED14, GAL11/MED15 and SIN4/MED16. The head and the middle modules interact directly with RNA polymerase II, whereas the elongated tail module interacts with gene-specific regulatory proteins. PGD1/MED3 interacts directly with the CYC8-TUP1 corepressor proteins.</text>
</comment>
<comment type="interaction">
    <interactant intactId="EBI-13268">
        <id>P40356</id>
    </interactant>
    <interactant intactId="EBI-18215">
        <id>P14922</id>
        <label>CYC8</label>
    </interactant>
    <organismsDiffer>false</organismsDiffer>
    <experiments>3</experiments>
</comment>
<comment type="interaction">
    <interactant intactId="EBI-13268">
        <id>P40356</id>
    </interactant>
    <interactant intactId="EBI-19654">
        <id>P16649</id>
        <label>TUP1</label>
    </interactant>
    <organismsDiffer>false</organismsDiffer>
    <experiments>3</experiments>
</comment>
<comment type="subcellular location">
    <subcellularLocation>
        <location evidence="3 8 10">Nucleus</location>
    </subcellularLocation>
</comment>
<comment type="miscellaneous">
    <text evidence="4">Present with 556 molecules/cell in log phase SD medium.</text>
</comment>
<comment type="similarity">
    <text evidence="11">Belongs to the mediator complex subunit 3 family.</text>
</comment>
<comment type="sequence caution" evidence="11">
    <conflict type="erroneous initiation">
        <sequence resource="EMBL-CDS" id="AAT92986"/>
    </conflict>
</comment>
<comment type="sequence caution" evidence="11">
    <conflict type="erroneous initiation">
        <sequence resource="EMBL-CDS" id="CAA57213"/>
    </conflict>
</comment>
<comment type="sequence caution" evidence="11">
    <conflict type="erroneous initiation">
        <sequence resource="EMBL-CDS" id="CAA81213"/>
    </conflict>
</comment>
<comment type="sequence caution" evidence="11">
    <conflict type="erroneous initiation">
        <sequence resource="EMBL-CDS" id="CAA96725"/>
    </conflict>
</comment>
<keyword id="KW-0002">3D-structure</keyword>
<keyword id="KW-0007">Acetylation</keyword>
<keyword id="KW-0010">Activator</keyword>
<keyword id="KW-0539">Nucleus</keyword>
<keyword id="KW-1185">Reference proteome</keyword>
<keyword id="KW-0804">Transcription</keyword>
<keyword id="KW-0805">Transcription regulation</keyword>
<sequence>MDSIIPAGVKLDDLQVILAKNENETRDKVCKQINEARDEILPLRLQFNEFIQIMANIDQEGSKQADRMAKYLHIRDKILQLNDRFQTLSSHLEALQPLFSTVPEYLKTADNRDRSFQLLEPLSTYNKNGNAVCSTATVVSTNHSAAASTPTTTATPHANPITHAHSLSNPNSTATMQHNPLAGKRGPKSGSTMGTPTVHNSTAAAPIAAPKKPRKPRQTKKAKAQAQAQAQAQAQVYAQQSTVQTPITASMAAALPNPTPSMINSVSPTNVMGTPLTNMMSPMGNAYSMGAQNQGGQVSMSQFNGSGNGSNPNTNTNSNNTPLQSQLNLNNLTPANILNMSMNNDFQQQQQQQQQQQQPQPQYNMNMGMNNMNNGGKELDSLDLNNLELGGLNMDFL</sequence>
<reference key="1">
    <citation type="journal article" date="1994" name="Yeast">
        <title>A new nuclear suppressor system for a mitochondrial RNA polymerase mutant identifies an unusual zinc-finger protein and a polyglutamine domain protein in Saccharomyces cerevisiae.</title>
        <authorList>
            <person name="Broehl S."/>
            <person name="Lisowsky T."/>
            <person name="Riemen G."/>
            <person name="Michaelis G."/>
        </authorList>
    </citation>
    <scope>NUCLEOTIDE SEQUENCE [GENOMIC DNA]</scope>
    <source>
        <strain>SC167</strain>
    </source>
</reference>
<reference key="2">
    <citation type="journal article" date="1996" name="Genetics">
        <title>The yeast HRS1 gene encodes a polyglutamine-rich nuclear protein required for spontaneous and hpr1-induced deletions between direct repeats.</title>
        <authorList>
            <person name="Santos-Rosa H."/>
            <person name="Clever B."/>
            <person name="Heyer W.-D."/>
            <person name="Aguilera A."/>
        </authorList>
    </citation>
    <scope>NUCLEOTIDE SEQUENCE [GENOMIC DNA]</scope>
    <scope>FUNCTION</scope>
    <scope>SUBCELLULAR LOCATION</scope>
</reference>
<reference key="3">
    <citation type="journal article" date="1997" name="Nature">
        <title>The nucleotide sequence of Saccharomyces cerevisiae chromosome VII.</title>
        <authorList>
            <person name="Tettelin H."/>
            <person name="Agostoni-Carbone M.L."/>
            <person name="Albermann K."/>
            <person name="Albers M."/>
            <person name="Arroyo J."/>
            <person name="Backes U."/>
            <person name="Barreiros T."/>
            <person name="Bertani I."/>
            <person name="Bjourson A.J."/>
            <person name="Brueckner M."/>
            <person name="Bruschi C.V."/>
            <person name="Carignani G."/>
            <person name="Castagnoli L."/>
            <person name="Cerdan E."/>
            <person name="Clemente M.L."/>
            <person name="Coblenz A."/>
            <person name="Coglievina M."/>
            <person name="Coissac E."/>
            <person name="Defoor E."/>
            <person name="Del Bino S."/>
            <person name="Delius H."/>
            <person name="Delneri D."/>
            <person name="de Wergifosse P."/>
            <person name="Dujon B."/>
            <person name="Durand P."/>
            <person name="Entian K.-D."/>
            <person name="Eraso P."/>
            <person name="Escribano V."/>
            <person name="Fabiani L."/>
            <person name="Fartmann B."/>
            <person name="Feroli F."/>
            <person name="Feuermann M."/>
            <person name="Frontali L."/>
            <person name="Garcia-Gonzalez M."/>
            <person name="Garcia-Saez M.I."/>
            <person name="Goffeau A."/>
            <person name="Guerreiro P."/>
            <person name="Hani J."/>
            <person name="Hansen M."/>
            <person name="Hebling U."/>
            <person name="Hernandez K."/>
            <person name="Heumann K."/>
            <person name="Hilger F."/>
            <person name="Hofmann B."/>
            <person name="Indge K.J."/>
            <person name="James C.M."/>
            <person name="Klima R."/>
            <person name="Koetter P."/>
            <person name="Kramer B."/>
            <person name="Kramer W."/>
            <person name="Lauquin G."/>
            <person name="Leuther H."/>
            <person name="Louis E.J."/>
            <person name="Maillier E."/>
            <person name="Marconi A."/>
            <person name="Martegani E."/>
            <person name="Mazon M.J."/>
            <person name="Mazzoni C."/>
            <person name="McReynolds A.D.K."/>
            <person name="Melchioretto P."/>
            <person name="Mewes H.-W."/>
            <person name="Minenkova O."/>
            <person name="Mueller-Auer S."/>
            <person name="Nawrocki A."/>
            <person name="Netter P."/>
            <person name="Neu R."/>
            <person name="Nombela C."/>
            <person name="Oliver S.G."/>
            <person name="Panzeri L."/>
            <person name="Paoluzi S."/>
            <person name="Plevani P."/>
            <person name="Portetelle D."/>
            <person name="Portillo F."/>
            <person name="Potier S."/>
            <person name="Purnelle B."/>
            <person name="Rieger M."/>
            <person name="Riles L."/>
            <person name="Rinaldi T."/>
            <person name="Robben J."/>
            <person name="Rodrigues-Pousada C."/>
            <person name="Rodriguez-Belmonte E."/>
            <person name="Rodriguez-Torres A.M."/>
            <person name="Rose M."/>
            <person name="Ruzzi M."/>
            <person name="Saliola M."/>
            <person name="Sanchez-Perez M."/>
            <person name="Schaefer B."/>
            <person name="Schaefer M."/>
            <person name="Scharfe M."/>
            <person name="Schmidheini T."/>
            <person name="Schreer A."/>
            <person name="Skala J."/>
            <person name="Souciet J.-L."/>
            <person name="Steensma H.Y."/>
            <person name="Talla E."/>
            <person name="Thierry A."/>
            <person name="Vandenbol M."/>
            <person name="van der Aart Q.J.M."/>
            <person name="Van Dyck L."/>
            <person name="Vanoni M."/>
            <person name="Verhasselt P."/>
            <person name="Voet M."/>
            <person name="Volckaert G."/>
            <person name="Wambutt R."/>
            <person name="Watson M.D."/>
            <person name="Weber N."/>
            <person name="Wedler E."/>
            <person name="Wedler H."/>
            <person name="Wipfli P."/>
            <person name="Wolf K."/>
            <person name="Wright L.F."/>
            <person name="Zaccaria P."/>
            <person name="Zimmermann M."/>
            <person name="Zollner A."/>
            <person name="Kleine K."/>
        </authorList>
    </citation>
    <scope>NUCLEOTIDE SEQUENCE [LARGE SCALE GENOMIC DNA]</scope>
    <source>
        <strain>ATCC 204508 / S288c</strain>
    </source>
</reference>
<reference key="4">
    <citation type="journal article" date="2014" name="G3 (Bethesda)">
        <title>The reference genome sequence of Saccharomyces cerevisiae: Then and now.</title>
        <authorList>
            <person name="Engel S.R."/>
            <person name="Dietrich F.S."/>
            <person name="Fisk D.G."/>
            <person name="Binkley G."/>
            <person name="Balakrishnan R."/>
            <person name="Costanzo M.C."/>
            <person name="Dwight S.S."/>
            <person name="Hitz B.C."/>
            <person name="Karra K."/>
            <person name="Nash R.S."/>
            <person name="Weng S."/>
            <person name="Wong E.D."/>
            <person name="Lloyd P."/>
            <person name="Skrzypek M.S."/>
            <person name="Miyasato S.R."/>
            <person name="Simison M."/>
            <person name="Cherry J.M."/>
        </authorList>
    </citation>
    <scope>GENOME REANNOTATION</scope>
    <source>
        <strain>ATCC 204508 / S288c</strain>
    </source>
</reference>
<reference key="5">
    <citation type="journal article" date="2007" name="Genome Res.">
        <title>Approaching a complete repository of sequence-verified protein-encoding clones for Saccharomyces cerevisiae.</title>
        <authorList>
            <person name="Hu Y."/>
            <person name="Rolfs A."/>
            <person name="Bhullar B."/>
            <person name="Murthy T.V.S."/>
            <person name="Zhu C."/>
            <person name="Berger M.F."/>
            <person name="Camargo A.A."/>
            <person name="Kelley F."/>
            <person name="McCarron S."/>
            <person name="Jepson D."/>
            <person name="Richardson A."/>
            <person name="Raphael J."/>
            <person name="Moreira D."/>
            <person name="Taycher E."/>
            <person name="Zuo D."/>
            <person name="Mohr S."/>
            <person name="Kane M.F."/>
            <person name="Williamson J."/>
            <person name="Simpson A.J.G."/>
            <person name="Bulyk M.L."/>
            <person name="Harlow E."/>
            <person name="Marsischky G."/>
            <person name="Kolodner R.D."/>
            <person name="LaBaer J."/>
        </authorList>
    </citation>
    <scope>NUCLEOTIDE SEQUENCE [GENOMIC DNA]</scope>
    <source>
        <strain>ATCC 204508 / S288c</strain>
    </source>
</reference>
<reference key="6">
    <citation type="journal article" date="1998" name="Genes Dev.">
        <title>The Med proteins of yeast and their function through the RNA polymerase II carboxy-terminal domain.</title>
        <authorList>
            <person name="Myers L.C."/>
            <person name="Gustafsson C.M."/>
            <person name="Bushnell D.A."/>
            <person name="Lui M."/>
            <person name="Erdjument-Bromage H."/>
            <person name="Tempst P."/>
            <person name="Kornberg R.D."/>
        </authorList>
    </citation>
    <scope>IDENTIFICATION BY MASS SPECTROMETRY</scope>
    <scope>COMPONENT OF MEDIATOR COMPLEX</scope>
</reference>
<reference key="7">
    <citation type="journal article" date="2000" name="J. Biol. Chem.">
        <title>Hrs1/Med3 is a Cyc8-Tup1 corepressor target in the RNA polymerase II holoenzyme.</title>
        <authorList>
            <person name="Papamichos-Chronakis M."/>
            <person name="Conlan R.S."/>
            <person name="Gounalaki N."/>
            <person name="Copf T."/>
            <person name="Tzamarias D."/>
        </authorList>
    </citation>
    <scope>FUNCTION</scope>
    <scope>INTERACTION WITH CYC8 AND TUP1</scope>
</reference>
<reference key="8">
    <citation type="journal article" date="2003" name="Nature">
        <title>Sequencing and comparison of yeast species to identify genes and regulatory elements.</title>
        <authorList>
            <person name="Kellis M."/>
            <person name="Patterson N."/>
            <person name="Endrizzi M."/>
            <person name="Birren B.W."/>
            <person name="Lander E.S."/>
        </authorList>
    </citation>
    <scope>IDENTIFICATION OF PROBABLE INITIATION SITE</scope>
</reference>
<reference key="9">
    <citation type="journal article" date="2003" name="Nature">
        <title>Global analysis of protein localization in budding yeast.</title>
        <authorList>
            <person name="Huh W.-K."/>
            <person name="Falvo J.V."/>
            <person name="Gerke L.C."/>
            <person name="Carroll A.S."/>
            <person name="Howson R.W."/>
            <person name="Weissman J.S."/>
            <person name="O'Shea E.K."/>
        </authorList>
    </citation>
    <scope>SUBCELLULAR LOCATION [LARGE SCALE ANALYSIS]</scope>
</reference>
<reference key="10">
    <citation type="journal article" date="2003" name="Nature">
        <title>Global analysis of protein expression in yeast.</title>
        <authorList>
            <person name="Ghaemmaghami S."/>
            <person name="Huh W.-K."/>
            <person name="Bower K."/>
            <person name="Howson R.W."/>
            <person name="Belle A."/>
            <person name="Dephoure N."/>
            <person name="O'Shea E.K."/>
            <person name="Weissman J.S."/>
        </authorList>
    </citation>
    <scope>LEVEL OF PROTEIN EXPRESSION [LARGE SCALE ANALYSIS]</scope>
</reference>
<reference key="11">
    <citation type="journal article" date="2004" name="Mol. Cell">
        <title>A unified nomenclature for protein subunits of mediator complexes linking transcriptional regulators to RNA polymerase II.</title>
        <authorList>
            <person name="Bourbon H.-M."/>
            <person name="Aguilera A."/>
            <person name="Ansari A.Z."/>
            <person name="Asturias F.J."/>
            <person name="Berk A.J."/>
            <person name="Bjoerklund S."/>
            <person name="Blackwell T.K."/>
            <person name="Borggrefe T."/>
            <person name="Carey M."/>
            <person name="Carlson M."/>
            <person name="Conaway J.W."/>
            <person name="Conaway R.C."/>
            <person name="Emmons S.W."/>
            <person name="Fondell J.D."/>
            <person name="Freedman L.P."/>
            <person name="Fukasawa T."/>
            <person name="Gustafsson C.M."/>
            <person name="Han M."/>
            <person name="He X."/>
            <person name="Herman P.K."/>
            <person name="Hinnebusch A.G."/>
            <person name="Holmberg S."/>
            <person name="Holstege F.C.P."/>
            <person name="Jaehning J.A."/>
            <person name="Kim Y.-J."/>
            <person name="Kuras L."/>
            <person name="Leutz A."/>
            <person name="Lis J.T."/>
            <person name="Meisterernest M."/>
            <person name="Naeaer A.M."/>
            <person name="Nasmyth K."/>
            <person name="Parvin J.D."/>
            <person name="Ptashne M."/>
            <person name="Reinberg D."/>
            <person name="Ronne H."/>
            <person name="Sadowski I."/>
            <person name="Sakurai H."/>
            <person name="Sipiczki M."/>
            <person name="Sternberg P.W."/>
            <person name="Stillman D.J."/>
            <person name="Strich R."/>
            <person name="Struhl K."/>
            <person name="Svejstrup J.Q."/>
            <person name="Tuck S."/>
            <person name="Winston F."/>
            <person name="Roeder R.G."/>
            <person name="Kornberg R.D."/>
        </authorList>
    </citation>
    <scope>NOMENCLATURE</scope>
</reference>
<reference key="12">
    <citation type="journal article" date="2004" name="Nucleic Acids Res.">
        <title>A high resolution protein interaction map of the yeast Mediator complex.</title>
        <authorList>
            <person name="Guglielmi B."/>
            <person name="van Berkum N.L."/>
            <person name="Klapholz B."/>
            <person name="Bijma T."/>
            <person name="Boube M."/>
            <person name="Boschiero C."/>
            <person name="Bourbon H.-M."/>
            <person name="Holstege F.C.P."/>
            <person name="Werner M."/>
        </authorList>
    </citation>
    <scope>TOPOLOGY OF THE MEDIATOR COMPLEX</scope>
</reference>
<reference key="13">
    <citation type="journal article" date="2005" name="J. Biol. Chem.">
        <title>Preponderance of free mediator in the yeast Saccharomyces cerevisiae.</title>
        <authorList>
            <person name="Takagi Y."/>
            <person name="Chadick J.Z."/>
            <person name="Davis J.A."/>
            <person name="Asturias F.J."/>
        </authorList>
    </citation>
    <scope>CHARACTERIZATION OF THE MEDIATOR COMPLEX</scope>
</reference>
<reference key="14">
    <citation type="journal article" date="2005" name="J. Biol. Chem.">
        <title>Mediator and TFIIH govern carboxyl-terminal domain-dependent transcription in yeast extracts.</title>
        <authorList>
            <person name="Nair D."/>
            <person name="Kim Y."/>
            <person name="Myers L.C."/>
        </authorList>
    </citation>
    <scope>FUNCTION OF THE MEDIATOR COMPLEX</scope>
</reference>
<reference key="15">
    <citation type="journal article" date="2005" name="Mol. Cell">
        <title>Mediator expression profiling epistasis reveals a signal transduction pathway with antagonistic submodules and highly specific downstream targets.</title>
        <authorList>
            <person name="van de Peppel J."/>
            <person name="Kettelarij N."/>
            <person name="van Bakel H."/>
            <person name="Kockelkorn T.T.J.P."/>
            <person name="van Leenen D."/>
            <person name="Holstege F.C.P."/>
        </authorList>
    </citation>
    <scope>FUNCTION</scope>
</reference>
<reference key="16">
    <citation type="journal article" date="2006" name="J. Biol. Chem.">
        <title>Mediator as a general transcription factor.</title>
        <authorList>
            <person name="Takagi Y."/>
            <person name="Kornberg R.D."/>
        </authorList>
    </citation>
    <scope>FUNCTION OF THE MEDIATOR COMPLEX</scope>
</reference>
<reference key="17">
    <citation type="journal article" date="2006" name="Mol. Cell">
        <title>Genome-wide location of the coactivator mediator: binding without activation and transient Cdk8 interaction on DNA.</title>
        <authorList>
            <person name="Andrau J.-C."/>
            <person name="van de Pasch L."/>
            <person name="Lijnzaad P."/>
            <person name="Bijma T."/>
            <person name="Koerkamp M.G."/>
            <person name="van de Peppel J."/>
            <person name="Werner M."/>
            <person name="Holstege F.C.P."/>
        </authorList>
    </citation>
    <scope>SUBCELLULAR LOCATION</scope>
</reference>
<reference key="18">
    <citation type="journal article" date="2007" name="J. Biol. Chem.">
        <title>Med19(Rox3) regulates intermodule interactions in the Saccharomyces cerevisiae mediator complex.</title>
        <authorList>
            <person name="Baidoobonso S.M."/>
            <person name="Guidi B.W."/>
            <person name="Myers L.C."/>
        </authorList>
    </citation>
    <scope>CHARACTERIZATION OF THE MEDIATOR COMPLEX</scope>
    <scope>INTERACTION OF THE MEDIATOR COMPLEX WITH RNA POLYMERASE II</scope>
</reference>
<reference key="19">
    <citation type="journal article" date="2009" name="Science">
        <title>Global analysis of Cdk1 substrate phosphorylation sites provides insights into evolution.</title>
        <authorList>
            <person name="Holt L.J."/>
            <person name="Tuch B.B."/>
            <person name="Villen J."/>
            <person name="Johnson A.D."/>
            <person name="Gygi S.P."/>
            <person name="Morgan D.O."/>
        </authorList>
    </citation>
    <scope>IDENTIFICATION BY MASS SPECTROMETRY [LARGE SCALE ANALYSIS]</scope>
</reference>
<reference key="20">
    <citation type="journal article" date="2012" name="Proc. Natl. Acad. Sci. U.S.A.">
        <title>N-terminal acetylome analyses and functional insights of the N-terminal acetyltransferase NatB.</title>
        <authorList>
            <person name="Van Damme P."/>
            <person name="Lasa M."/>
            <person name="Polevoda B."/>
            <person name="Gazquez C."/>
            <person name="Elosegui-Artola A."/>
            <person name="Kim D.S."/>
            <person name="De Juan-Pardo E."/>
            <person name="Demeyer K."/>
            <person name="Hole K."/>
            <person name="Larrea E."/>
            <person name="Timmerman E."/>
            <person name="Prieto J."/>
            <person name="Arnesen T."/>
            <person name="Sherman F."/>
            <person name="Gevaert K."/>
            <person name="Aldabe R."/>
        </authorList>
    </citation>
    <scope>ACETYLATION [LARGE SCALE ANALYSIS] AT MET-1</scope>
    <scope>IDENTIFICATION BY MASS SPECTROMETRY [LARGE SCALE ANALYSIS]</scope>
</reference>
<reference key="21">
    <citation type="journal article" date="2002" name="Mol. Cell">
        <title>Structure of the yeast RNA polymerase II holoenzyme: mediator conformation and polymerase interaction.</title>
        <authorList>
            <person name="Davis J.A."/>
            <person name="Takagi Y."/>
            <person name="Kornberg R.D."/>
            <person name="Asturias F.J."/>
        </authorList>
    </citation>
    <scope>ELECTRON MICROSCOPY OF MEDIATOR COMPLEX IN COMPLEX WITH RNA POLYMERASE II</scope>
</reference>
<dbReference type="EMBL" id="X81457">
    <property type="protein sequence ID" value="CAA57213.1"/>
    <property type="status" value="ALT_INIT"/>
    <property type="molecule type" value="Genomic_DNA"/>
</dbReference>
<dbReference type="EMBL" id="Z26254">
    <property type="protein sequence ID" value="CAA81213.1"/>
    <property type="status" value="ALT_INIT"/>
    <property type="molecule type" value="Genomic_DNA"/>
</dbReference>
<dbReference type="EMBL" id="Z72547">
    <property type="protein sequence ID" value="CAA96725.1"/>
    <property type="status" value="ALT_INIT"/>
    <property type="molecule type" value="Genomic_DNA"/>
</dbReference>
<dbReference type="EMBL" id="AY692967">
    <property type="protein sequence ID" value="AAT92986.1"/>
    <property type="status" value="ALT_INIT"/>
    <property type="molecule type" value="Genomic_DNA"/>
</dbReference>
<dbReference type="EMBL" id="BK006941">
    <property type="protein sequence ID" value="DAA08074.1"/>
    <property type="molecule type" value="Genomic_DNA"/>
</dbReference>
<dbReference type="PIR" id="S46594">
    <property type="entry name" value="S46594"/>
</dbReference>
<dbReference type="RefSeq" id="NP_011490.2">
    <property type="nucleotide sequence ID" value="NM_001180890.1"/>
</dbReference>
<dbReference type="PDB" id="7UIC">
    <property type="method" value="EM"/>
    <property type="resolution" value="3.70 A"/>
    <property type="chains" value="c=1-397"/>
</dbReference>
<dbReference type="PDB" id="7UIK">
    <property type="method" value="EM"/>
    <property type="resolution" value="7.70 A"/>
    <property type="chains" value="c=1-397"/>
</dbReference>
<dbReference type="PDB" id="7UIL">
    <property type="method" value="EM"/>
    <property type="resolution" value="4.30 A"/>
    <property type="chains" value="2/c=1-397"/>
</dbReference>
<dbReference type="PDB" id="7UIO">
    <property type="method" value="EM"/>
    <property type="resolution" value="3.30 A"/>
    <property type="chains" value="Ac/Bc=1-397"/>
</dbReference>
<dbReference type="PDBsum" id="7UIC"/>
<dbReference type="PDBsum" id="7UIK"/>
<dbReference type="PDBsum" id="7UIL"/>
<dbReference type="PDBsum" id="7UIO"/>
<dbReference type="EMDB" id="EMD-26543"/>
<dbReference type="EMDB" id="EMD-26547"/>
<dbReference type="EMDB" id="EMD-26548"/>
<dbReference type="EMDB" id="EMD-26551"/>
<dbReference type="SMR" id="P40356"/>
<dbReference type="BioGRID" id="33222">
    <property type="interactions" value="197"/>
</dbReference>
<dbReference type="ComplexPortal" id="CPX-3226">
    <property type="entry name" value="Core mediator complex"/>
</dbReference>
<dbReference type="DIP" id="DIP-1186N"/>
<dbReference type="FunCoup" id="P40356">
    <property type="interactions" value="158"/>
</dbReference>
<dbReference type="IntAct" id="P40356">
    <property type="interactions" value="29"/>
</dbReference>
<dbReference type="MINT" id="P40356"/>
<dbReference type="STRING" id="4932.YGL025C"/>
<dbReference type="GlyGen" id="P40356">
    <property type="glycosylation" value="2 sites, 1 O-linked glycan (1 site)"/>
</dbReference>
<dbReference type="iPTMnet" id="P40356"/>
<dbReference type="PaxDb" id="4932-YGL025C"/>
<dbReference type="PeptideAtlas" id="P40356"/>
<dbReference type="EnsemblFungi" id="YGL025C_mRNA">
    <property type="protein sequence ID" value="YGL025C"/>
    <property type="gene ID" value="YGL025C"/>
</dbReference>
<dbReference type="GeneID" id="852860"/>
<dbReference type="KEGG" id="sce:YGL025C"/>
<dbReference type="AGR" id="SGD:S000002993"/>
<dbReference type="SGD" id="S000002993">
    <property type="gene designation" value="PGD1"/>
</dbReference>
<dbReference type="VEuPathDB" id="FungiDB:YGL025C"/>
<dbReference type="eggNOG" id="ENOG502S3GT">
    <property type="taxonomic scope" value="Eukaryota"/>
</dbReference>
<dbReference type="HOGENOM" id="CLU_049224_0_0_1"/>
<dbReference type="InParanoid" id="P40356"/>
<dbReference type="OMA" id="FIQIMAN"/>
<dbReference type="OrthoDB" id="4070475at2759"/>
<dbReference type="BioCyc" id="YEAST:G3O-30543-MONOMER"/>
<dbReference type="BioGRID-ORCS" id="852860">
    <property type="hits" value="2 hits in 10 CRISPR screens"/>
</dbReference>
<dbReference type="CD-CODE" id="A777E0F8">
    <property type="entry name" value="P-body"/>
</dbReference>
<dbReference type="CD-CODE" id="E03F929F">
    <property type="entry name" value="Stress granule"/>
</dbReference>
<dbReference type="PRO" id="PR:P40356"/>
<dbReference type="Proteomes" id="UP000002311">
    <property type="component" value="Chromosome VII"/>
</dbReference>
<dbReference type="RNAct" id="P40356">
    <property type="molecule type" value="protein"/>
</dbReference>
<dbReference type="GO" id="GO:0070847">
    <property type="term" value="C:core mediator complex"/>
    <property type="evidence" value="ECO:0000314"/>
    <property type="project" value="SGD"/>
</dbReference>
<dbReference type="GO" id="GO:0016592">
    <property type="term" value="C:mediator complex"/>
    <property type="evidence" value="ECO:0007669"/>
    <property type="project" value="InterPro"/>
</dbReference>
<dbReference type="GO" id="GO:0005634">
    <property type="term" value="C:nucleus"/>
    <property type="evidence" value="ECO:0000314"/>
    <property type="project" value="ComplexPortal"/>
</dbReference>
<dbReference type="GO" id="GO:0000979">
    <property type="term" value="F:RNA polymerase II core promoter sequence-specific DNA binding"/>
    <property type="evidence" value="ECO:0000314"/>
    <property type="project" value="SGD"/>
</dbReference>
<dbReference type="GO" id="GO:0061629">
    <property type="term" value="F:RNA polymerase II-specific DNA-binding transcription factor binding"/>
    <property type="evidence" value="ECO:0000314"/>
    <property type="project" value="SGD"/>
</dbReference>
<dbReference type="GO" id="GO:0003713">
    <property type="term" value="F:transcription coactivator activity"/>
    <property type="evidence" value="ECO:0000315"/>
    <property type="project" value="SGD"/>
</dbReference>
<dbReference type="GO" id="GO:0034605">
    <property type="term" value="P:cellular response to heat"/>
    <property type="evidence" value="ECO:0000314"/>
    <property type="project" value="SGD"/>
</dbReference>
<dbReference type="GO" id="GO:0000122">
    <property type="term" value="P:negative regulation of transcription by RNA polymerase II"/>
    <property type="evidence" value="ECO:0000315"/>
    <property type="project" value="SGD"/>
</dbReference>
<dbReference type="GO" id="GO:0045944">
    <property type="term" value="P:positive regulation of transcription by RNA polymerase II"/>
    <property type="evidence" value="ECO:0000315"/>
    <property type="project" value="SGD"/>
</dbReference>
<dbReference type="GO" id="GO:0032968">
    <property type="term" value="P:positive regulation of transcription elongation by RNA polymerase II"/>
    <property type="evidence" value="ECO:0000314"/>
    <property type="project" value="ComplexPortal"/>
</dbReference>
<dbReference type="GO" id="GO:0060261">
    <property type="term" value="P:positive regulation of transcription initiation by RNA polymerase II"/>
    <property type="evidence" value="ECO:0000314"/>
    <property type="project" value="ComplexPortal"/>
</dbReference>
<dbReference type="GO" id="GO:0051123">
    <property type="term" value="P:RNA polymerase II preinitiation complex assembly"/>
    <property type="evidence" value="ECO:0000314"/>
    <property type="project" value="ComplexPortal"/>
</dbReference>
<dbReference type="InterPro" id="IPR020998">
    <property type="entry name" value="Med3"/>
</dbReference>
<dbReference type="Pfam" id="PF11593">
    <property type="entry name" value="Med3"/>
    <property type="match status" value="1"/>
</dbReference>
<accession>P40356</accession>
<accession>D6VUB3</accession>
<accession>Q6B1W3</accession>
<gene>
    <name type="primary">PGD1</name>
    <name type="synonym">HRS1</name>
    <name type="synonym">MED3</name>
    <name type="ordered locus">YGL025C</name>
</gene>
<name>MED3_YEAST</name>